<keyword id="KW-0021">Allosteric enzyme</keyword>
<keyword id="KW-0028">Amino-acid biosynthesis</keyword>
<keyword id="KW-0057">Aromatic amino acid biosynthesis</keyword>
<keyword id="KW-0150">Chloroplast</keyword>
<keyword id="KW-0413">Isomerase</keyword>
<keyword id="KW-0934">Plastid</keyword>
<keyword id="KW-0809">Transit peptide</keyword>
<proteinExistence type="evidence at protein level"/>
<sequence length="324" mass="36946">METQLLRFPSHTITSSITTNSSRNTTPFLPHKKWSHFVKFQLVNSSSSIKHGIRPLQASATSLGLGNKNRVDETESYTLDGIRHSLIRQEDSIIFSLVERAQYCYNAETYDPDVFAMDGFHGSLVEYIVRETEKLHATVGRYKSPDEHPFFPKVLPEPVLPPMQYPKVLHPIADSININVKIWEMYFENLLPRLVKEGDDGNYGSTAVCDTICVQALSKRIHYGKFVAEAKYRASPEVYNAAIRAQDRNGLMDLLTYPAVEEAIKRRVEIKTRTYGQELHINGPENGGDPVYKIKPSLVAELYGDWIMPLTKEVQVQYLLRRLD</sequence>
<gene>
    <name evidence="7" type="primary">CM1</name>
</gene>
<feature type="transit peptide" description="Chloroplast" evidence="3">
    <location>
        <begin position="1"/>
        <end position="56"/>
    </location>
</feature>
<feature type="chain" id="PRO_0000451505" description="Chorismate mutase 1, chloroplastic">
    <location>
        <begin position="57"/>
        <end position="324"/>
    </location>
</feature>
<feature type="domain" description="Chorismate mutase" evidence="4">
    <location>
        <begin position="70"/>
        <end position="324"/>
    </location>
</feature>
<feature type="binding site" evidence="2">
    <location>
        <position position="70"/>
    </location>
    <ligand>
        <name>L-phenylalanine</name>
        <dbReference type="ChEBI" id="CHEBI:58095"/>
        <note>allosteric inhibitor</note>
    </ligand>
</feature>
<feature type="binding site" evidence="2">
    <location>
        <position position="141"/>
    </location>
    <ligand>
        <name>L-tyrosine</name>
        <dbReference type="ChEBI" id="CHEBI:58315"/>
        <note>allosteric inhibitor</note>
    </ligand>
</feature>
<feature type="binding site" evidence="2">
    <location>
        <begin position="202"/>
        <end position="205"/>
    </location>
    <ligand>
        <name>L-phenylalanine</name>
        <dbReference type="ChEBI" id="CHEBI:58095"/>
        <note>allosteric inhibitor</note>
    </ligand>
</feature>
<feature type="binding site" evidence="2">
    <location>
        <begin position="202"/>
        <end position="205"/>
    </location>
    <ligand>
        <name>L-tyrosine</name>
        <dbReference type="ChEBI" id="CHEBI:58315"/>
        <note>allosteric inhibitor</note>
    </ligand>
</feature>
<accession>D2CSU4</accession>
<reference key="1">
    <citation type="journal article" date="2010" name="Plant J.">
        <title>A petunia chorismate mutase specialized for the production of floral volatiles.</title>
        <authorList>
            <person name="Colquhoun T.A."/>
            <person name="Schimmel B.C."/>
            <person name="Kim J.Y."/>
            <person name="Reinhardt D."/>
            <person name="Cline K."/>
            <person name="Clark D.G."/>
        </authorList>
    </citation>
    <scope>NUCLEOTIDE SEQUENCE [MRNA]</scope>
    <scope>FUNCTION</scope>
    <scope>DISRUPTION PHENOTYPE</scope>
    <scope>CATALYTIC ACTIVITY</scope>
    <scope>TISSUE SPECIFICITY</scope>
    <scope>DEVELOPMENTAL STAGE</scope>
    <scope>ACTIVITY REGULATION</scope>
    <scope>SUBCELLULAR LOCATION</scope>
    <scope>PATHWAY</scope>
    <source>
        <strain>cv. Mitchell</strain>
    </source>
</reference>
<reference key="2">
    <citation type="journal article" date="2012" name="Plant Cell">
        <title>The R2R3-MYB-like regulatory factor EOBI, acting downstream of EOBII, regulates scent production by activating ODO1 and structural scent-related genes in petunia.</title>
        <authorList>
            <person name="Spitzer-Rimon B."/>
            <person name="Farhi M."/>
            <person name="Albo B."/>
            <person name="Cna'ani A."/>
            <person name="Ben Zvi M.M."/>
            <person name="Masci T."/>
            <person name="Edelbaum O."/>
            <person name="Yu Y."/>
            <person name="Shklarman E."/>
            <person name="Ovadis M."/>
            <person name="Vainstein A."/>
        </authorList>
    </citation>
    <scope>INDUCTION BY EOBI</scope>
    <source>
        <strain>cv. W115</strain>
    </source>
</reference>
<dbReference type="EC" id="5.4.99.5" evidence="4 5"/>
<dbReference type="EMBL" id="EU751616">
    <property type="protein sequence ID" value="ACI41889.1"/>
    <property type="molecule type" value="mRNA"/>
</dbReference>
<dbReference type="SMR" id="D2CSU4"/>
<dbReference type="BRENDA" id="5.4.99.5">
    <property type="organism ID" value="4700"/>
</dbReference>
<dbReference type="UniPathway" id="UPA00120">
    <property type="reaction ID" value="UER00203"/>
</dbReference>
<dbReference type="GO" id="GO:0009570">
    <property type="term" value="C:chloroplast stroma"/>
    <property type="evidence" value="ECO:0000314"/>
    <property type="project" value="UniProtKB"/>
</dbReference>
<dbReference type="GO" id="GO:0004106">
    <property type="term" value="F:chorismate mutase activity"/>
    <property type="evidence" value="ECO:0000314"/>
    <property type="project" value="UniProtKB"/>
</dbReference>
<dbReference type="GO" id="GO:0008652">
    <property type="term" value="P:amino acid biosynthetic process"/>
    <property type="evidence" value="ECO:0007669"/>
    <property type="project" value="UniProtKB-KW"/>
</dbReference>
<dbReference type="GO" id="GO:0009073">
    <property type="term" value="P:aromatic amino acid family biosynthetic process"/>
    <property type="evidence" value="ECO:0007669"/>
    <property type="project" value="UniProtKB-KW"/>
</dbReference>
<dbReference type="GO" id="GO:0046417">
    <property type="term" value="P:chorismate metabolic process"/>
    <property type="evidence" value="ECO:0000314"/>
    <property type="project" value="UniProtKB"/>
</dbReference>
<dbReference type="GO" id="GO:0010597">
    <property type="term" value="P:green leaf volatile biosynthetic process"/>
    <property type="evidence" value="ECO:0000315"/>
    <property type="project" value="UniProtKB"/>
</dbReference>
<dbReference type="FunFam" id="1.10.590.10:FF:000001">
    <property type="entry name" value="Chorismate mutase"/>
    <property type="match status" value="1"/>
</dbReference>
<dbReference type="Gene3D" id="1.10.590.10">
    <property type="entry name" value="Chorismate mutase, AroQ class superfamily, eukaryotic"/>
    <property type="match status" value="1"/>
</dbReference>
<dbReference type="InterPro" id="IPR036263">
    <property type="entry name" value="Chorismate_II_sf"/>
</dbReference>
<dbReference type="InterPro" id="IPR008238">
    <property type="entry name" value="Chorismate_mutase_AroQ_euk"/>
</dbReference>
<dbReference type="InterPro" id="IPR037039">
    <property type="entry name" value="CM_AroQ_sf_eucaryotic"/>
</dbReference>
<dbReference type="InterPro" id="IPR002701">
    <property type="entry name" value="CM_II_prokaryot"/>
</dbReference>
<dbReference type="NCBIfam" id="TIGR01802">
    <property type="entry name" value="CM_pl-yst"/>
    <property type="match status" value="1"/>
</dbReference>
<dbReference type="PANTHER" id="PTHR21145">
    <property type="entry name" value="CHORISMATE MUTASE"/>
    <property type="match status" value="1"/>
</dbReference>
<dbReference type="PANTHER" id="PTHR21145:SF0">
    <property type="entry name" value="CHORISMATE MUTASE 1, CHLOROPLASTIC"/>
    <property type="match status" value="1"/>
</dbReference>
<dbReference type="Pfam" id="PF01817">
    <property type="entry name" value="CM_2"/>
    <property type="match status" value="1"/>
</dbReference>
<dbReference type="SUPFAM" id="SSF48600">
    <property type="entry name" value="Chorismate mutase II"/>
    <property type="match status" value="1"/>
</dbReference>
<dbReference type="PROSITE" id="PS51169">
    <property type="entry name" value="CHORISMATE_MUT_3"/>
    <property type="match status" value="1"/>
</dbReference>
<organism>
    <name type="scientific">Petunia hybrida</name>
    <name type="common">Petunia</name>
    <dbReference type="NCBI Taxonomy" id="4102"/>
    <lineage>
        <taxon>Eukaryota</taxon>
        <taxon>Viridiplantae</taxon>
        <taxon>Streptophyta</taxon>
        <taxon>Embryophyta</taxon>
        <taxon>Tracheophyta</taxon>
        <taxon>Spermatophyta</taxon>
        <taxon>Magnoliopsida</taxon>
        <taxon>eudicotyledons</taxon>
        <taxon>Gunneridae</taxon>
        <taxon>Pentapetalae</taxon>
        <taxon>asterids</taxon>
        <taxon>lamiids</taxon>
        <taxon>Solanales</taxon>
        <taxon>Solanaceae</taxon>
        <taxon>Petunioideae</taxon>
        <taxon>Petunia</taxon>
    </lineage>
</organism>
<evidence type="ECO:0000250" key="1">
    <source>
        <dbReference type="UniProtKB" id="B4FNK8"/>
    </source>
</evidence>
<evidence type="ECO:0000250" key="2">
    <source>
        <dbReference type="UniProtKB" id="P42738"/>
    </source>
</evidence>
<evidence type="ECO:0000255" key="3"/>
<evidence type="ECO:0000255" key="4">
    <source>
        <dbReference type="PROSITE-ProRule" id="PRU00516"/>
    </source>
</evidence>
<evidence type="ECO:0000269" key="5">
    <source>
    </source>
</evidence>
<evidence type="ECO:0000269" key="6">
    <source>
    </source>
</evidence>
<evidence type="ECO:0000303" key="7">
    <source>
    </source>
</evidence>
<protein>
    <recommendedName>
        <fullName evidence="7">Chorismate mutase 1, chloroplastic</fullName>
        <shortName evidence="7">PhCM1</shortName>
        <ecNumber evidence="4 5">5.4.99.5</ecNumber>
    </recommendedName>
</protein>
<comment type="function">
    <text evidence="5">Component of the floral volatile benzenoid/phenylpropanoid (FVBPs) biosynthetic pathway (PubMed:19811620). Mediates the conversion of chorismate to prephenate, thus coupling metabolites from the shikimate pathway to the synthesis of FVBPs in the corolla (PubMed:19811620).</text>
</comment>
<comment type="catalytic activity">
    <reaction evidence="4 5">
        <text>chorismate = prephenate</text>
        <dbReference type="Rhea" id="RHEA:13897"/>
        <dbReference type="ChEBI" id="CHEBI:29748"/>
        <dbReference type="ChEBI" id="CHEBI:29934"/>
        <dbReference type="EC" id="5.4.99.5"/>
    </reaction>
</comment>
<comment type="activity regulation">
    <text evidence="5">Allosterically activated by tryptophan but not by tyrosine and phenylalanine.</text>
</comment>
<comment type="pathway">
    <text evidence="5">Metabolic intermediate biosynthesis; prephenate biosynthesis; prephenate from chorismate: step 1/1.</text>
</comment>
<comment type="subunit">
    <text evidence="1">Homodimer.</text>
</comment>
<comment type="subcellular location">
    <subcellularLocation>
        <location evidence="5">Plastid</location>
        <location evidence="5">Chloroplast stroma</location>
    </subcellularLocation>
</comment>
<comment type="tissue specificity">
    <text evidence="5">Mostly expressed in petal tubes and petal limbs, and, to a lower extent, in stigmas, anthers, sepals, roots, stems and leaves.</text>
</comment>
<comment type="developmental stage">
    <text evidence="5">Accumulates during flower development with highest levels in open flowers, at anthesis, and fades out as flowers are senescing.</text>
</comment>
<comment type="induction">
    <text evidence="6">Triggered by EOBI in flowers.</text>
</comment>
<comment type="disruption phenotype">
    <text evidence="5">Reduced emission of floral volatile benzenoid/phenylpropanoid (FVBP) compounds associated with a strongly impaired chorismate mutase activity in corolla tissues.</text>
</comment>
<name>CM1_PETHY</name>